<proteinExistence type="inferred from homology"/>
<organism>
    <name type="scientific">Streptococcus pneumoniae (strain ATCC BAA-255 / R6)</name>
    <dbReference type="NCBI Taxonomy" id="171101"/>
    <lineage>
        <taxon>Bacteria</taxon>
        <taxon>Bacillati</taxon>
        <taxon>Bacillota</taxon>
        <taxon>Bacilli</taxon>
        <taxon>Lactobacillales</taxon>
        <taxon>Streptococcaceae</taxon>
        <taxon>Streptococcus</taxon>
    </lineage>
</organism>
<name>MURB_STRR6</name>
<evidence type="ECO:0000255" key="1">
    <source>
        <dbReference type="HAMAP-Rule" id="MF_00037"/>
    </source>
</evidence>
<keyword id="KW-0131">Cell cycle</keyword>
<keyword id="KW-0132">Cell division</keyword>
<keyword id="KW-0133">Cell shape</keyword>
<keyword id="KW-0961">Cell wall biogenesis/degradation</keyword>
<keyword id="KW-0963">Cytoplasm</keyword>
<keyword id="KW-0274">FAD</keyword>
<keyword id="KW-0285">Flavoprotein</keyword>
<keyword id="KW-0521">NADP</keyword>
<keyword id="KW-0560">Oxidoreductase</keyword>
<keyword id="KW-0573">Peptidoglycan synthesis</keyword>
<keyword id="KW-1185">Reference proteome</keyword>
<gene>
    <name evidence="1" type="primary">murB</name>
    <name type="ordered locus">spr1247</name>
</gene>
<sequence>MSVREKMLEILEGIDIRFKEPLHSYSYTKVGGEADYLVFPRNRFELARVVKFANQENIPWMVLGNASNIIVRDGGIRGFVILCDKLNNVSVDGYTIEAEAGANLIETTRIALRHSLTGFEFACGIPGSVGGAVFMNAGAYGGEIAHILQSCKVLTKDGEIETLSAKDLAFGYRHSAIQESGAVVLSVKFALAPGTHQVIKQEMDRLTHLRELKQPLEYPSCGSVFKRPVGHFAGQLISEAGLKGYRIGGVEVSEKHAGFMINVADGTAKDYEDLIQSVIEKVKEHSGITLEREVRILGESLSVAKMYAGGFTPCKR</sequence>
<reference key="1">
    <citation type="journal article" date="2001" name="J. Bacteriol.">
        <title>Genome of the bacterium Streptococcus pneumoniae strain R6.</title>
        <authorList>
            <person name="Hoskins J."/>
            <person name="Alborn W.E. Jr."/>
            <person name="Arnold J."/>
            <person name="Blaszczak L.C."/>
            <person name="Burgett S."/>
            <person name="DeHoff B.S."/>
            <person name="Estrem S.T."/>
            <person name="Fritz L."/>
            <person name="Fu D.-J."/>
            <person name="Fuller W."/>
            <person name="Geringer C."/>
            <person name="Gilmour R."/>
            <person name="Glass J.S."/>
            <person name="Khoja H."/>
            <person name="Kraft A.R."/>
            <person name="Lagace R.E."/>
            <person name="LeBlanc D.J."/>
            <person name="Lee L.N."/>
            <person name="Lefkowitz E.J."/>
            <person name="Lu J."/>
            <person name="Matsushima P."/>
            <person name="McAhren S.M."/>
            <person name="McHenney M."/>
            <person name="McLeaster K."/>
            <person name="Mundy C.W."/>
            <person name="Nicas T.I."/>
            <person name="Norris F.H."/>
            <person name="O'Gara M."/>
            <person name="Peery R.B."/>
            <person name="Robertson G.T."/>
            <person name="Rockey P."/>
            <person name="Sun P.-M."/>
            <person name="Winkler M.E."/>
            <person name="Yang Y."/>
            <person name="Young-Bellido M."/>
            <person name="Zhao G."/>
            <person name="Zook C.A."/>
            <person name="Baltz R.H."/>
            <person name="Jaskunas S.R."/>
            <person name="Rosteck P.R. Jr."/>
            <person name="Skatrud P.L."/>
            <person name="Glass J.I."/>
        </authorList>
    </citation>
    <scope>NUCLEOTIDE SEQUENCE [LARGE SCALE GENOMIC DNA]</scope>
    <source>
        <strain>ATCC BAA-255 / R6</strain>
    </source>
</reference>
<dbReference type="EC" id="1.3.1.98" evidence="1"/>
<dbReference type="EMBL" id="AE007317">
    <property type="protein sequence ID" value="AAL00051.1"/>
    <property type="molecule type" value="Genomic_DNA"/>
</dbReference>
<dbReference type="PIR" id="F98027">
    <property type="entry name" value="F98027"/>
</dbReference>
<dbReference type="RefSeq" id="NP_358840.1">
    <property type="nucleotide sequence ID" value="NC_003098.1"/>
</dbReference>
<dbReference type="RefSeq" id="WP_000116181.1">
    <property type="nucleotide sequence ID" value="NC_003098.1"/>
</dbReference>
<dbReference type="SMR" id="P65467"/>
<dbReference type="STRING" id="171101.spr1247"/>
<dbReference type="KEGG" id="spr:spr1247"/>
<dbReference type="PATRIC" id="fig|171101.6.peg.1352"/>
<dbReference type="eggNOG" id="COG0812">
    <property type="taxonomic scope" value="Bacteria"/>
</dbReference>
<dbReference type="HOGENOM" id="CLU_035304_1_1_9"/>
<dbReference type="UniPathway" id="UPA00219"/>
<dbReference type="Proteomes" id="UP000000586">
    <property type="component" value="Chromosome"/>
</dbReference>
<dbReference type="GO" id="GO:0005829">
    <property type="term" value="C:cytosol"/>
    <property type="evidence" value="ECO:0000318"/>
    <property type="project" value="GO_Central"/>
</dbReference>
<dbReference type="GO" id="GO:0071949">
    <property type="term" value="F:FAD binding"/>
    <property type="evidence" value="ECO:0007669"/>
    <property type="project" value="InterPro"/>
</dbReference>
<dbReference type="GO" id="GO:0050660">
    <property type="term" value="F:flavin adenine dinucleotide binding"/>
    <property type="evidence" value="ECO:0000318"/>
    <property type="project" value="GO_Central"/>
</dbReference>
<dbReference type="GO" id="GO:0008762">
    <property type="term" value="F:UDP-N-acetylmuramate dehydrogenase activity"/>
    <property type="evidence" value="ECO:0000318"/>
    <property type="project" value="GO_Central"/>
</dbReference>
<dbReference type="GO" id="GO:0051301">
    <property type="term" value="P:cell division"/>
    <property type="evidence" value="ECO:0007669"/>
    <property type="project" value="UniProtKB-KW"/>
</dbReference>
<dbReference type="GO" id="GO:0071555">
    <property type="term" value="P:cell wall organization"/>
    <property type="evidence" value="ECO:0000318"/>
    <property type="project" value="GO_Central"/>
</dbReference>
<dbReference type="GO" id="GO:0009252">
    <property type="term" value="P:peptidoglycan biosynthetic process"/>
    <property type="evidence" value="ECO:0007669"/>
    <property type="project" value="UniProtKB-UniRule"/>
</dbReference>
<dbReference type="GO" id="GO:0008360">
    <property type="term" value="P:regulation of cell shape"/>
    <property type="evidence" value="ECO:0007669"/>
    <property type="project" value="UniProtKB-KW"/>
</dbReference>
<dbReference type="Gene3D" id="3.30.465.10">
    <property type="match status" value="1"/>
</dbReference>
<dbReference type="Gene3D" id="3.90.78.10">
    <property type="entry name" value="UDP-N-acetylenolpyruvoylglucosamine reductase, C-terminal domain"/>
    <property type="match status" value="1"/>
</dbReference>
<dbReference type="Gene3D" id="3.30.43.10">
    <property type="entry name" value="Uridine Diphospho-n-acetylenolpyruvylglucosamine Reductase, domain 2"/>
    <property type="match status" value="1"/>
</dbReference>
<dbReference type="HAMAP" id="MF_00037">
    <property type="entry name" value="MurB"/>
    <property type="match status" value="1"/>
</dbReference>
<dbReference type="InterPro" id="IPR016166">
    <property type="entry name" value="FAD-bd_PCMH"/>
</dbReference>
<dbReference type="InterPro" id="IPR036318">
    <property type="entry name" value="FAD-bd_PCMH-like_sf"/>
</dbReference>
<dbReference type="InterPro" id="IPR016167">
    <property type="entry name" value="FAD-bd_PCMH_sub1"/>
</dbReference>
<dbReference type="InterPro" id="IPR016169">
    <property type="entry name" value="FAD-bd_PCMH_sub2"/>
</dbReference>
<dbReference type="InterPro" id="IPR003170">
    <property type="entry name" value="MurB"/>
</dbReference>
<dbReference type="InterPro" id="IPR011601">
    <property type="entry name" value="MurB_C"/>
</dbReference>
<dbReference type="InterPro" id="IPR036635">
    <property type="entry name" value="MurB_C_sf"/>
</dbReference>
<dbReference type="InterPro" id="IPR006094">
    <property type="entry name" value="Oxid_FAD_bind_N"/>
</dbReference>
<dbReference type="NCBIfam" id="TIGR00179">
    <property type="entry name" value="murB"/>
    <property type="match status" value="1"/>
</dbReference>
<dbReference type="NCBIfam" id="NF010480">
    <property type="entry name" value="PRK13905.1"/>
    <property type="match status" value="1"/>
</dbReference>
<dbReference type="PANTHER" id="PTHR21071">
    <property type="entry name" value="UDP-N-ACETYLENOLPYRUVOYLGLUCOSAMINE REDUCTASE"/>
    <property type="match status" value="1"/>
</dbReference>
<dbReference type="PANTHER" id="PTHR21071:SF4">
    <property type="entry name" value="UDP-N-ACETYLENOLPYRUVOYLGLUCOSAMINE REDUCTASE"/>
    <property type="match status" value="1"/>
</dbReference>
<dbReference type="Pfam" id="PF01565">
    <property type="entry name" value="FAD_binding_4"/>
    <property type="match status" value="1"/>
</dbReference>
<dbReference type="Pfam" id="PF02873">
    <property type="entry name" value="MurB_C"/>
    <property type="match status" value="1"/>
</dbReference>
<dbReference type="SUPFAM" id="SSF56176">
    <property type="entry name" value="FAD-binding/transporter-associated domain-like"/>
    <property type="match status" value="1"/>
</dbReference>
<dbReference type="SUPFAM" id="SSF56194">
    <property type="entry name" value="Uridine diphospho-N-Acetylenolpyruvylglucosamine reductase, MurB, C-terminal domain"/>
    <property type="match status" value="1"/>
</dbReference>
<dbReference type="PROSITE" id="PS51387">
    <property type="entry name" value="FAD_PCMH"/>
    <property type="match status" value="1"/>
</dbReference>
<comment type="function">
    <text evidence="1">Cell wall formation.</text>
</comment>
<comment type="catalytic activity">
    <reaction evidence="1">
        <text>UDP-N-acetyl-alpha-D-muramate + NADP(+) = UDP-N-acetyl-3-O-(1-carboxyvinyl)-alpha-D-glucosamine + NADPH + H(+)</text>
        <dbReference type="Rhea" id="RHEA:12248"/>
        <dbReference type="ChEBI" id="CHEBI:15378"/>
        <dbReference type="ChEBI" id="CHEBI:57783"/>
        <dbReference type="ChEBI" id="CHEBI:58349"/>
        <dbReference type="ChEBI" id="CHEBI:68483"/>
        <dbReference type="ChEBI" id="CHEBI:70757"/>
        <dbReference type="EC" id="1.3.1.98"/>
    </reaction>
</comment>
<comment type="cofactor">
    <cofactor evidence="1">
        <name>FAD</name>
        <dbReference type="ChEBI" id="CHEBI:57692"/>
    </cofactor>
</comment>
<comment type="pathway">
    <text evidence="1">Cell wall biogenesis; peptidoglycan biosynthesis.</text>
</comment>
<comment type="subcellular location">
    <subcellularLocation>
        <location evidence="1">Cytoplasm</location>
    </subcellularLocation>
</comment>
<comment type="similarity">
    <text evidence="1">Belongs to the MurB family.</text>
</comment>
<protein>
    <recommendedName>
        <fullName evidence="1">UDP-N-acetylenolpyruvoylglucosamine reductase</fullName>
        <ecNumber evidence="1">1.3.1.98</ecNumber>
    </recommendedName>
    <alternativeName>
        <fullName evidence="1">UDP-N-acetylmuramate dehydrogenase</fullName>
    </alternativeName>
</protein>
<feature type="chain" id="PRO_0000179271" description="UDP-N-acetylenolpyruvoylglucosamine reductase">
    <location>
        <begin position="1"/>
        <end position="316"/>
    </location>
</feature>
<feature type="domain" description="FAD-binding PCMH-type" evidence="1">
    <location>
        <begin position="30"/>
        <end position="194"/>
    </location>
</feature>
<feature type="active site" evidence="1">
    <location>
        <position position="173"/>
    </location>
</feature>
<feature type="active site" description="Proton donor" evidence="1">
    <location>
        <position position="223"/>
    </location>
</feature>
<feature type="active site" evidence="1">
    <location>
        <position position="293"/>
    </location>
</feature>
<accession>P65467</accession>
<accession>Q8DPC1</accession>
<accession>Q97Q41</accession>